<sequence length="555" mass="61760">MAADMQRKRSSEGPDGTLAPSDGQSVERAESPTPGLAQGMEPGAGQEGAMFVHARSYEDLTESEDGAASGESPKEGAGGPPPLATDMRQISQDFSELSTQLTGVARDLQEEMLPGSSEDWPESPGAARRPATEPPRDGAGEGDEEEAAEAWRRHQKHVFVLSEAGKPVYSRYGSEEALSSTMGVMVALVSFLEADKNAIRSIHADGYKVVFVRRSPLVLVAVARTRQSAQELAQELLYIYYQILSLLTGAQLSHIFQQKQNYDLRRLLSGSERITDNLLQLMARDPSFLMGAARCLPLAAAVRDVVSASLQQARARSLVFSILLARNQLVALVRRKDQFLHPIDLHLLFNLISSSSSFREGEAWTPVCLPKFNAAGFFHAHISYLEPDTDLCLLLVSTDREDFFAVSDCRRRFQERLRKRGAHLALREALRTPYYSVAQVGVPDLRHFLYKSKSSGLFTSPEIEAPYDSEEEQERLLGLYQYLHSRAHNASRPLKTIYYTGPNENLLAWVTGAFELYMCYSPLGTKASAVSAIHKLMRWIRKEEDRLFILTPLTY</sequence>
<protein>
    <recommendedName>
        <fullName>Vacuolar fusion protein MON1 homolog A</fullName>
    </recommendedName>
</protein>
<organism>
    <name type="scientific">Bos taurus</name>
    <name type="common">Bovine</name>
    <dbReference type="NCBI Taxonomy" id="9913"/>
    <lineage>
        <taxon>Eukaryota</taxon>
        <taxon>Metazoa</taxon>
        <taxon>Chordata</taxon>
        <taxon>Craniata</taxon>
        <taxon>Vertebrata</taxon>
        <taxon>Euteleostomi</taxon>
        <taxon>Mammalia</taxon>
        <taxon>Eutheria</taxon>
        <taxon>Laurasiatheria</taxon>
        <taxon>Artiodactyla</taxon>
        <taxon>Ruminantia</taxon>
        <taxon>Pecora</taxon>
        <taxon>Bovidae</taxon>
        <taxon>Bovinae</taxon>
        <taxon>Bos</taxon>
    </lineage>
</organism>
<evidence type="ECO:0000250" key="1">
    <source>
        <dbReference type="UniProtKB" id="Q6PDG8"/>
    </source>
</evidence>
<evidence type="ECO:0000250" key="2">
    <source>
        <dbReference type="UniProtKB" id="Q86VX9"/>
    </source>
</evidence>
<evidence type="ECO:0000256" key="3">
    <source>
        <dbReference type="SAM" id="MobiDB-lite"/>
    </source>
</evidence>
<evidence type="ECO:0000305" key="4"/>
<reference key="1">
    <citation type="journal article" date="2005" name="BMC Genomics">
        <title>Characterization of 954 bovine full-CDS cDNA sequences.</title>
        <authorList>
            <person name="Harhay G.P."/>
            <person name="Sonstegard T.S."/>
            <person name="Keele J.W."/>
            <person name="Heaton M.P."/>
            <person name="Clawson M.L."/>
            <person name="Snelling W.M."/>
            <person name="Wiedmann R.T."/>
            <person name="Van Tassell C.P."/>
            <person name="Smith T.P.L."/>
        </authorList>
    </citation>
    <scope>NUCLEOTIDE SEQUENCE [LARGE SCALE MRNA]</scope>
</reference>
<reference key="2">
    <citation type="submission" date="2006-06" db="EMBL/GenBank/DDBJ databases">
        <authorList>
            <consortium name="NIH - Mammalian Gene Collection (MGC) project"/>
        </authorList>
    </citation>
    <scope>NUCLEOTIDE SEQUENCE [LARGE SCALE MRNA]</scope>
    <source>
        <strain>Hereford</strain>
        <tissue>Thalamus</tissue>
    </source>
</reference>
<gene>
    <name type="primary">MON1A</name>
</gene>
<dbReference type="EMBL" id="BT020883">
    <property type="protein sequence ID" value="AAX08900.1"/>
    <property type="molecule type" value="mRNA"/>
</dbReference>
<dbReference type="EMBL" id="BC118164">
    <property type="protein sequence ID" value="AAI18165.1"/>
    <property type="molecule type" value="mRNA"/>
</dbReference>
<dbReference type="RefSeq" id="NP_001015623.1">
    <property type="nucleotide sequence ID" value="NM_001015623.1"/>
</dbReference>
<dbReference type="SMR" id="Q17QV2"/>
<dbReference type="FunCoup" id="Q17QV2">
    <property type="interactions" value="2649"/>
</dbReference>
<dbReference type="STRING" id="9913.ENSBTAP00000026711"/>
<dbReference type="PaxDb" id="9913-ENSBTAP00000026711"/>
<dbReference type="Ensembl" id="ENSBTAT00000026711.6">
    <property type="protein sequence ID" value="ENSBTAP00000026711.4"/>
    <property type="gene ID" value="ENSBTAG00000020047.6"/>
</dbReference>
<dbReference type="GeneID" id="520286"/>
<dbReference type="KEGG" id="bta:520286"/>
<dbReference type="CTD" id="84315"/>
<dbReference type="VEuPathDB" id="HostDB:ENSBTAG00000020047"/>
<dbReference type="VGNC" id="VGNC:31552">
    <property type="gene designation" value="MON1A"/>
</dbReference>
<dbReference type="eggNOG" id="KOG0997">
    <property type="taxonomic scope" value="Eukaryota"/>
</dbReference>
<dbReference type="GeneTree" id="ENSGT00390000006665"/>
<dbReference type="HOGENOM" id="CLU_014574_1_1_1"/>
<dbReference type="InParanoid" id="Q17QV2"/>
<dbReference type="OMA" id="QQPFNAK"/>
<dbReference type="OrthoDB" id="272411at2759"/>
<dbReference type="TreeFam" id="TF314665"/>
<dbReference type="Reactome" id="R-BTA-8876198">
    <property type="pathway name" value="RAB GEFs exchange GTP for GDP on RABs"/>
</dbReference>
<dbReference type="Proteomes" id="UP000009136">
    <property type="component" value="Chromosome 22"/>
</dbReference>
<dbReference type="Bgee" id="ENSBTAG00000020047">
    <property type="expression patterns" value="Expressed in choroid plexus and 103 other cell types or tissues"/>
</dbReference>
<dbReference type="GO" id="GO:0035658">
    <property type="term" value="C:Mon1-Ccz1 complex"/>
    <property type="evidence" value="ECO:0000318"/>
    <property type="project" value="GO_Central"/>
</dbReference>
<dbReference type="GO" id="GO:0005085">
    <property type="term" value="F:guanyl-nucleotide exchange factor activity"/>
    <property type="evidence" value="ECO:0000250"/>
    <property type="project" value="UniProtKB"/>
</dbReference>
<dbReference type="GO" id="GO:0009306">
    <property type="term" value="P:protein secretion"/>
    <property type="evidence" value="ECO:0000318"/>
    <property type="project" value="GO_Central"/>
</dbReference>
<dbReference type="GO" id="GO:0006623">
    <property type="term" value="P:protein targeting to vacuole"/>
    <property type="evidence" value="ECO:0007669"/>
    <property type="project" value="InterPro"/>
</dbReference>
<dbReference type="GO" id="GO:0016192">
    <property type="term" value="P:vesicle-mediated transport"/>
    <property type="evidence" value="ECO:0007669"/>
    <property type="project" value="InterPro"/>
</dbReference>
<dbReference type="InterPro" id="IPR043972">
    <property type="entry name" value="FUZ/MON1/HPS1_longin_1"/>
</dbReference>
<dbReference type="InterPro" id="IPR043971">
    <property type="entry name" value="FUZ/MON1/HPS1_longin_2"/>
</dbReference>
<dbReference type="InterPro" id="IPR043970">
    <property type="entry name" value="FUZ/MON1/HPS1_longin_3"/>
</dbReference>
<dbReference type="InterPro" id="IPR004353">
    <property type="entry name" value="Mon1"/>
</dbReference>
<dbReference type="PANTHER" id="PTHR13027">
    <property type="entry name" value="SAND PROTEIN-RELATED"/>
    <property type="match status" value="1"/>
</dbReference>
<dbReference type="PANTHER" id="PTHR13027:SF14">
    <property type="entry name" value="VACUOLAR FUSION PROTEIN MON1 HOMOLOG A"/>
    <property type="match status" value="1"/>
</dbReference>
<dbReference type="Pfam" id="PF19036">
    <property type="entry name" value="Fuz_longin_1"/>
    <property type="match status" value="1"/>
</dbReference>
<dbReference type="Pfam" id="PF19037">
    <property type="entry name" value="Fuz_longin_2"/>
    <property type="match status" value="1"/>
</dbReference>
<dbReference type="Pfam" id="PF19038">
    <property type="entry name" value="Fuz_longin_3"/>
    <property type="match status" value="1"/>
</dbReference>
<dbReference type="PRINTS" id="PR01546">
    <property type="entry name" value="YEAST73DUF"/>
</dbReference>
<comment type="function">
    <text evidence="1 2">Plays an important role in membrane trafficking through the secretory apparatus. Not involved in endocytic trafficking to lysosomes. Acts in concert with CCZ1, as a guanine exchange factor (GEF) for RAB7, promotes the exchange of GDP to GTP, converting it from an inactive GDP-bound form into an active GTP-bound form.</text>
</comment>
<comment type="subunit">
    <text evidence="2">Interacts with CCZ1 (By similarity). Found in a complex with RMC1, CCZ1, MON1A and MON1B (By similarity). The MON1A-CCZ1B complex interacts with RIMOC1 (By similarity). The MON1A-CCZ1B complex interacts with RAB7A and this interaction is enhanced in the presence of RIMOC1 (By similarity).</text>
</comment>
<comment type="similarity">
    <text evidence="4">Belongs to the MON1/SAND family.</text>
</comment>
<accession>Q17QV2</accession>
<accession>Q5E9N7</accession>
<feature type="chain" id="PRO_0000285760" description="Vacuolar fusion protein MON1 homolog A">
    <location>
        <begin position="1"/>
        <end position="555"/>
    </location>
</feature>
<feature type="region of interest" description="Disordered" evidence="3">
    <location>
        <begin position="1"/>
        <end position="90"/>
    </location>
</feature>
<feature type="region of interest" description="Disordered" evidence="3">
    <location>
        <begin position="112"/>
        <end position="149"/>
    </location>
</feature>
<feature type="compositionally biased region" description="Basic and acidic residues" evidence="3">
    <location>
        <begin position="1"/>
        <end position="12"/>
    </location>
</feature>
<feature type="compositionally biased region" description="Basic and acidic residues" evidence="3">
    <location>
        <begin position="130"/>
        <end position="139"/>
    </location>
</feature>
<feature type="modified residue" description="Phosphoserine" evidence="2">
    <location>
        <position position="31"/>
    </location>
</feature>
<feature type="modified residue" description="Phosphoserine" evidence="1">
    <location>
        <position position="56"/>
    </location>
</feature>
<feature type="modified residue" description="Phosphothreonine" evidence="2">
    <location>
        <position position="61"/>
    </location>
</feature>
<feature type="modified residue" description="Phosphoserine" evidence="2">
    <location>
        <position position="91"/>
    </location>
</feature>
<feature type="sequence conflict" description="In Ref. 1; AAX08900." evidence="4" ref="1">
    <original>DT</original>
    <variation>EA</variation>
    <location>
        <begin position="388"/>
        <end position="389"/>
    </location>
</feature>
<proteinExistence type="evidence at transcript level"/>
<name>MON1A_BOVIN</name>
<keyword id="KW-0344">Guanine-nucleotide releasing factor</keyword>
<keyword id="KW-0597">Phosphoprotein</keyword>
<keyword id="KW-1185">Reference proteome</keyword>